<accession>Q99TA0</accession>
<organism>
    <name type="scientific">Staphylococcus aureus (strain Mu50 / ATCC 700699)</name>
    <dbReference type="NCBI Taxonomy" id="158878"/>
    <lineage>
        <taxon>Bacteria</taxon>
        <taxon>Bacillati</taxon>
        <taxon>Bacillota</taxon>
        <taxon>Bacilli</taxon>
        <taxon>Bacillales</taxon>
        <taxon>Staphylococcaceae</taxon>
        <taxon>Staphylococcus</taxon>
    </lineage>
</organism>
<dbReference type="EC" id="4.1.99.12" evidence="1"/>
<dbReference type="EC" id="3.5.4.25" evidence="1"/>
<dbReference type="EMBL" id="BA000017">
    <property type="protein sequence ID" value="BAB57931.1"/>
    <property type="molecule type" value="Genomic_DNA"/>
</dbReference>
<dbReference type="SMR" id="Q99TA0"/>
<dbReference type="KEGG" id="sav:SAV1769"/>
<dbReference type="HOGENOM" id="CLU_020273_1_2_9"/>
<dbReference type="PhylomeDB" id="Q99TA0"/>
<dbReference type="UniPathway" id="UPA00275">
    <property type="reaction ID" value="UER00399"/>
</dbReference>
<dbReference type="UniPathway" id="UPA00275">
    <property type="reaction ID" value="UER00400"/>
</dbReference>
<dbReference type="Proteomes" id="UP000002481">
    <property type="component" value="Chromosome"/>
</dbReference>
<dbReference type="GO" id="GO:0005829">
    <property type="term" value="C:cytosol"/>
    <property type="evidence" value="ECO:0007669"/>
    <property type="project" value="TreeGrafter"/>
</dbReference>
<dbReference type="GO" id="GO:0008686">
    <property type="term" value="F:3,4-dihydroxy-2-butanone-4-phosphate synthase activity"/>
    <property type="evidence" value="ECO:0007669"/>
    <property type="project" value="UniProtKB-UniRule"/>
</dbReference>
<dbReference type="GO" id="GO:0005525">
    <property type="term" value="F:GTP binding"/>
    <property type="evidence" value="ECO:0007669"/>
    <property type="project" value="UniProtKB-KW"/>
</dbReference>
<dbReference type="GO" id="GO:0003935">
    <property type="term" value="F:GTP cyclohydrolase II activity"/>
    <property type="evidence" value="ECO:0007669"/>
    <property type="project" value="UniProtKB-UniRule"/>
</dbReference>
<dbReference type="GO" id="GO:0000287">
    <property type="term" value="F:magnesium ion binding"/>
    <property type="evidence" value="ECO:0007669"/>
    <property type="project" value="UniProtKB-UniRule"/>
</dbReference>
<dbReference type="GO" id="GO:0030145">
    <property type="term" value="F:manganese ion binding"/>
    <property type="evidence" value="ECO:0007669"/>
    <property type="project" value="UniProtKB-UniRule"/>
</dbReference>
<dbReference type="GO" id="GO:0008270">
    <property type="term" value="F:zinc ion binding"/>
    <property type="evidence" value="ECO:0007669"/>
    <property type="project" value="UniProtKB-UniRule"/>
</dbReference>
<dbReference type="GO" id="GO:0009231">
    <property type="term" value="P:riboflavin biosynthetic process"/>
    <property type="evidence" value="ECO:0007669"/>
    <property type="project" value="UniProtKB-UniRule"/>
</dbReference>
<dbReference type="CDD" id="cd00641">
    <property type="entry name" value="GTP_cyclohydro2"/>
    <property type="match status" value="1"/>
</dbReference>
<dbReference type="FunFam" id="3.40.50.10990:FF:000002">
    <property type="entry name" value="GTP cyclohydrolase-2"/>
    <property type="match status" value="1"/>
</dbReference>
<dbReference type="FunFam" id="3.90.870.10:FF:000001">
    <property type="entry name" value="Riboflavin biosynthesis protein RibBA"/>
    <property type="match status" value="1"/>
</dbReference>
<dbReference type="Gene3D" id="3.90.870.10">
    <property type="entry name" value="DHBP synthase"/>
    <property type="match status" value="1"/>
</dbReference>
<dbReference type="Gene3D" id="3.40.50.10990">
    <property type="entry name" value="GTP cyclohydrolase II"/>
    <property type="match status" value="1"/>
</dbReference>
<dbReference type="HAMAP" id="MF_00179">
    <property type="entry name" value="RibA"/>
    <property type="match status" value="1"/>
</dbReference>
<dbReference type="HAMAP" id="MF_00180">
    <property type="entry name" value="RibB"/>
    <property type="match status" value="1"/>
</dbReference>
<dbReference type="HAMAP" id="MF_01283">
    <property type="entry name" value="RibBA"/>
    <property type="match status" value="1"/>
</dbReference>
<dbReference type="InterPro" id="IPR017945">
    <property type="entry name" value="DHBP_synth_RibB-like_a/b_dom"/>
</dbReference>
<dbReference type="InterPro" id="IPR000422">
    <property type="entry name" value="DHBP_synthase_RibB"/>
</dbReference>
<dbReference type="InterPro" id="IPR032677">
    <property type="entry name" value="GTP_cyclohydro_II"/>
</dbReference>
<dbReference type="InterPro" id="IPR000926">
    <property type="entry name" value="RibA"/>
</dbReference>
<dbReference type="InterPro" id="IPR036144">
    <property type="entry name" value="RibA-like_sf"/>
</dbReference>
<dbReference type="InterPro" id="IPR016299">
    <property type="entry name" value="Riboflavin_synth_RibBA"/>
</dbReference>
<dbReference type="NCBIfam" id="NF001591">
    <property type="entry name" value="PRK00393.1"/>
    <property type="match status" value="1"/>
</dbReference>
<dbReference type="NCBIfam" id="TIGR00505">
    <property type="entry name" value="ribA"/>
    <property type="match status" value="1"/>
</dbReference>
<dbReference type="NCBIfam" id="TIGR00506">
    <property type="entry name" value="ribB"/>
    <property type="match status" value="1"/>
</dbReference>
<dbReference type="PANTHER" id="PTHR21327:SF18">
    <property type="entry name" value="3,4-DIHYDROXY-2-BUTANONE 4-PHOSPHATE SYNTHASE"/>
    <property type="match status" value="1"/>
</dbReference>
<dbReference type="PANTHER" id="PTHR21327">
    <property type="entry name" value="GTP CYCLOHYDROLASE II-RELATED"/>
    <property type="match status" value="1"/>
</dbReference>
<dbReference type="Pfam" id="PF00926">
    <property type="entry name" value="DHBP_synthase"/>
    <property type="match status" value="1"/>
</dbReference>
<dbReference type="Pfam" id="PF00925">
    <property type="entry name" value="GTP_cyclohydro2"/>
    <property type="match status" value="1"/>
</dbReference>
<dbReference type="PIRSF" id="PIRSF001259">
    <property type="entry name" value="RibA"/>
    <property type="match status" value="1"/>
</dbReference>
<dbReference type="SUPFAM" id="SSF142695">
    <property type="entry name" value="RibA-like"/>
    <property type="match status" value="1"/>
</dbReference>
<dbReference type="SUPFAM" id="SSF55821">
    <property type="entry name" value="YrdC/RibB"/>
    <property type="match status" value="1"/>
</dbReference>
<reference key="1">
    <citation type="journal article" date="2001" name="Lancet">
        <title>Whole genome sequencing of meticillin-resistant Staphylococcus aureus.</title>
        <authorList>
            <person name="Kuroda M."/>
            <person name="Ohta T."/>
            <person name="Uchiyama I."/>
            <person name="Baba T."/>
            <person name="Yuzawa H."/>
            <person name="Kobayashi I."/>
            <person name="Cui L."/>
            <person name="Oguchi A."/>
            <person name="Aoki K."/>
            <person name="Nagai Y."/>
            <person name="Lian J.-Q."/>
            <person name="Ito T."/>
            <person name="Kanamori M."/>
            <person name="Matsumaru H."/>
            <person name="Maruyama A."/>
            <person name="Murakami H."/>
            <person name="Hosoyama A."/>
            <person name="Mizutani-Ui Y."/>
            <person name="Takahashi N.K."/>
            <person name="Sawano T."/>
            <person name="Inoue R."/>
            <person name="Kaito C."/>
            <person name="Sekimizu K."/>
            <person name="Hirakawa H."/>
            <person name="Kuhara S."/>
            <person name="Goto S."/>
            <person name="Yabuzaki J."/>
            <person name="Kanehisa M."/>
            <person name="Yamashita A."/>
            <person name="Oshima K."/>
            <person name="Furuya K."/>
            <person name="Yoshino C."/>
            <person name="Shiba T."/>
            <person name="Hattori M."/>
            <person name="Ogasawara N."/>
            <person name="Hayashi H."/>
            <person name="Hiramatsu K."/>
        </authorList>
    </citation>
    <scope>NUCLEOTIDE SEQUENCE [LARGE SCALE GENOMIC DNA]</scope>
    <source>
        <strain>Mu50 / ATCC 700699</strain>
    </source>
</reference>
<protein>
    <recommendedName>
        <fullName evidence="1">Riboflavin biosynthesis protein RibBA</fullName>
    </recommendedName>
    <domain>
        <recommendedName>
            <fullName evidence="1">3,4-dihydroxy-2-butanone 4-phosphate synthase</fullName>
            <shortName evidence="1">DHBP synthase</shortName>
            <ecNumber evidence="1">4.1.99.12</ecNumber>
        </recommendedName>
    </domain>
    <domain>
        <recommendedName>
            <fullName evidence="1">GTP cyclohydrolase-2</fullName>
            <ecNumber evidence="1">3.5.4.25</ecNumber>
        </recommendedName>
        <alternativeName>
            <fullName evidence="1">GTP cyclohydrolase II</fullName>
        </alternativeName>
    </domain>
</protein>
<sequence>MQFDNIDSALMALKNGETIIVVDDENRENEGDLVAVTEWMNDNTINFMAKEARGLICAPVSKDIAQRLDLVQMVDDNSDIFGTQFTVSIDHVDTTTGISAYERTLTAKKLIDPSSEAKDFNRPGHLFPLVAQDKGVLARNGHTEAAVDLAKLTGAKPAGVICEIMNDDGTMAKGQDLQNFKEKHQLKMITIDDLIEYRKKLEPEIEFKAKVKMPTDFGTFDMYGFKATYTDEEIVVLTKGAIRQHENVRLHSACLTGDIFHSQRCDCGAQLESSMKYINEHGGMIIYLPQEGRGIGLLNKLRAYELIEQGYDTVTANLALGFDEDLRDYHIAAQILKYFNIEHINLLSNNPSKFEGLKQYGIDIAERIEVIVPETVHNHDYMVTKKIKMGHLI</sequence>
<keyword id="KW-0342">GTP-binding</keyword>
<keyword id="KW-0378">Hydrolase</keyword>
<keyword id="KW-0456">Lyase</keyword>
<keyword id="KW-0460">Magnesium</keyword>
<keyword id="KW-0464">Manganese</keyword>
<keyword id="KW-0479">Metal-binding</keyword>
<keyword id="KW-0511">Multifunctional enzyme</keyword>
<keyword id="KW-0547">Nucleotide-binding</keyword>
<keyword id="KW-0686">Riboflavin biosynthesis</keyword>
<keyword id="KW-0862">Zinc</keyword>
<name>RIBBA_STAAM</name>
<feature type="chain" id="PRO_0000151734" description="Riboflavin biosynthesis protein RibBA">
    <location>
        <begin position="1"/>
        <end position="393"/>
    </location>
</feature>
<feature type="region of interest" description="DHBP synthase">
    <location>
        <begin position="1"/>
        <end position="200"/>
    </location>
</feature>
<feature type="region of interest" description="GTP cyclohydrolase II">
    <location>
        <begin position="201"/>
        <end position="393"/>
    </location>
</feature>
<feature type="active site" description="Proton acceptor; for GTP cyclohydrolase activity" evidence="1">
    <location>
        <position position="325"/>
    </location>
</feature>
<feature type="active site" description="Nucleophile; for GTP cyclohydrolase activity" evidence="1">
    <location>
        <position position="327"/>
    </location>
</feature>
<feature type="binding site" evidence="1">
    <location>
        <begin position="27"/>
        <end position="28"/>
    </location>
    <ligand>
        <name>D-ribulose 5-phosphate</name>
        <dbReference type="ChEBI" id="CHEBI:58121"/>
    </ligand>
</feature>
<feature type="binding site" evidence="1">
    <location>
        <position position="28"/>
    </location>
    <ligand>
        <name>Mg(2+)</name>
        <dbReference type="ChEBI" id="CHEBI:18420"/>
        <label>1</label>
    </ligand>
</feature>
<feature type="binding site" evidence="1">
    <location>
        <position position="28"/>
    </location>
    <ligand>
        <name>Mg(2+)</name>
        <dbReference type="ChEBI" id="CHEBI:18420"/>
        <label>2</label>
    </ligand>
</feature>
<feature type="binding site" evidence="1">
    <location>
        <position position="32"/>
    </location>
    <ligand>
        <name>D-ribulose 5-phosphate</name>
        <dbReference type="ChEBI" id="CHEBI:58121"/>
    </ligand>
</feature>
<feature type="binding site" evidence="1">
    <location>
        <begin position="139"/>
        <end position="143"/>
    </location>
    <ligand>
        <name>D-ribulose 5-phosphate</name>
        <dbReference type="ChEBI" id="CHEBI:58121"/>
    </ligand>
</feature>
<feature type="binding site" evidence="1">
    <location>
        <position position="142"/>
    </location>
    <ligand>
        <name>Mg(2+)</name>
        <dbReference type="ChEBI" id="CHEBI:18420"/>
        <label>2</label>
    </ligand>
</feature>
<feature type="binding site" evidence="1">
    <location>
        <position position="163"/>
    </location>
    <ligand>
        <name>D-ribulose 5-phosphate</name>
        <dbReference type="ChEBI" id="CHEBI:58121"/>
    </ligand>
</feature>
<feature type="binding site" evidence="1">
    <location>
        <begin position="249"/>
        <end position="253"/>
    </location>
    <ligand>
        <name>GTP</name>
        <dbReference type="ChEBI" id="CHEBI:37565"/>
    </ligand>
</feature>
<feature type="binding site" evidence="1">
    <location>
        <position position="254"/>
    </location>
    <ligand>
        <name>Zn(2+)</name>
        <dbReference type="ChEBI" id="CHEBI:29105"/>
        <note>catalytic</note>
    </ligand>
</feature>
<feature type="binding site" evidence="1">
    <location>
        <position position="265"/>
    </location>
    <ligand>
        <name>Zn(2+)</name>
        <dbReference type="ChEBI" id="CHEBI:29105"/>
        <note>catalytic</note>
    </ligand>
</feature>
<feature type="binding site" evidence="1">
    <location>
        <position position="267"/>
    </location>
    <ligand>
        <name>Zn(2+)</name>
        <dbReference type="ChEBI" id="CHEBI:29105"/>
        <note>catalytic</note>
    </ligand>
</feature>
<feature type="binding site" evidence="1">
    <location>
        <position position="270"/>
    </location>
    <ligand>
        <name>GTP</name>
        <dbReference type="ChEBI" id="CHEBI:37565"/>
    </ligand>
</feature>
<feature type="binding site" evidence="1">
    <location>
        <begin position="291"/>
        <end position="293"/>
    </location>
    <ligand>
        <name>GTP</name>
        <dbReference type="ChEBI" id="CHEBI:37565"/>
    </ligand>
</feature>
<feature type="binding site" evidence="1">
    <location>
        <position position="313"/>
    </location>
    <ligand>
        <name>GTP</name>
        <dbReference type="ChEBI" id="CHEBI:37565"/>
    </ligand>
</feature>
<feature type="binding site" evidence="1">
    <location>
        <position position="348"/>
    </location>
    <ligand>
        <name>GTP</name>
        <dbReference type="ChEBI" id="CHEBI:37565"/>
    </ligand>
</feature>
<feature type="binding site" evidence="1">
    <location>
        <position position="353"/>
    </location>
    <ligand>
        <name>GTP</name>
        <dbReference type="ChEBI" id="CHEBI:37565"/>
    </ligand>
</feature>
<feature type="site" description="Essential for DHBP synthase activity" evidence="1">
    <location>
        <position position="125"/>
    </location>
</feature>
<feature type="site" description="Essential for DHBP synthase activity" evidence="1">
    <location>
        <position position="163"/>
    </location>
</feature>
<proteinExistence type="inferred from homology"/>
<comment type="function">
    <text evidence="1">Catalyzes the conversion of D-ribulose 5-phosphate to formate and 3,4-dihydroxy-2-butanone 4-phosphate.</text>
</comment>
<comment type="function">
    <text evidence="1">Catalyzes the conversion of GTP to 2,5-diamino-6-ribosylamino-4(3H)-pyrimidinone 5'-phosphate (DARP), formate and pyrophosphate.</text>
</comment>
<comment type="catalytic activity">
    <reaction evidence="1">
        <text>D-ribulose 5-phosphate = (2S)-2-hydroxy-3-oxobutyl phosphate + formate + H(+)</text>
        <dbReference type="Rhea" id="RHEA:18457"/>
        <dbReference type="ChEBI" id="CHEBI:15378"/>
        <dbReference type="ChEBI" id="CHEBI:15740"/>
        <dbReference type="ChEBI" id="CHEBI:58121"/>
        <dbReference type="ChEBI" id="CHEBI:58830"/>
        <dbReference type="EC" id="4.1.99.12"/>
    </reaction>
</comment>
<comment type="catalytic activity">
    <reaction evidence="1">
        <text>GTP + 4 H2O = 2,5-diamino-6-hydroxy-4-(5-phosphoribosylamino)-pyrimidine + formate + 2 phosphate + 3 H(+)</text>
        <dbReference type="Rhea" id="RHEA:23704"/>
        <dbReference type="ChEBI" id="CHEBI:15377"/>
        <dbReference type="ChEBI" id="CHEBI:15378"/>
        <dbReference type="ChEBI" id="CHEBI:15740"/>
        <dbReference type="ChEBI" id="CHEBI:37565"/>
        <dbReference type="ChEBI" id="CHEBI:43474"/>
        <dbReference type="ChEBI" id="CHEBI:58614"/>
        <dbReference type="EC" id="3.5.4.25"/>
    </reaction>
</comment>
<comment type="cofactor">
    <cofactor evidence="1">
        <name>Mg(2+)</name>
        <dbReference type="ChEBI" id="CHEBI:18420"/>
    </cofactor>
    <cofactor evidence="1">
        <name>Mn(2+)</name>
        <dbReference type="ChEBI" id="CHEBI:29035"/>
    </cofactor>
    <text evidence="1">Binds 2 divalent metal cations per subunit. Magnesium or manganese.</text>
</comment>
<comment type="cofactor">
    <cofactor evidence="1">
        <name>Zn(2+)</name>
        <dbReference type="ChEBI" id="CHEBI:29105"/>
    </cofactor>
    <text evidence="1">Binds 1 zinc ion per subunit.</text>
</comment>
<comment type="pathway">
    <text evidence="1">Cofactor biosynthesis; riboflavin biosynthesis; 2-hydroxy-3-oxobutyl phosphate from D-ribulose 5-phosphate: step 1/1.</text>
</comment>
<comment type="pathway">
    <text evidence="1">Cofactor biosynthesis; riboflavin biosynthesis; 5-amino-6-(D-ribitylamino)uracil from GTP: step 1/4.</text>
</comment>
<comment type="similarity">
    <text evidence="1">In the N-terminal section; belongs to the DHBP synthase family.</text>
</comment>
<comment type="similarity">
    <text evidence="1">In the C-terminal section; belongs to the GTP cyclohydrolase II family.</text>
</comment>
<gene>
    <name evidence="1" type="primary">ribBA</name>
    <name type="synonym">ribA</name>
    <name type="ordered locus">SAV1769</name>
</gene>
<evidence type="ECO:0000255" key="1">
    <source>
        <dbReference type="HAMAP-Rule" id="MF_01283"/>
    </source>
</evidence>